<dbReference type="EC" id="6.3.4.4" evidence="1"/>
<dbReference type="EMBL" id="CP000489">
    <property type="protein sequence ID" value="ABL68715.1"/>
    <property type="molecule type" value="Genomic_DNA"/>
</dbReference>
<dbReference type="RefSeq" id="WP_011746948.1">
    <property type="nucleotide sequence ID" value="NC_008686.1"/>
</dbReference>
<dbReference type="SMR" id="A1AZM1"/>
<dbReference type="STRING" id="318586.Pden_0603"/>
<dbReference type="EnsemblBacteria" id="ABL68715">
    <property type="protein sequence ID" value="ABL68715"/>
    <property type="gene ID" value="Pden_0603"/>
</dbReference>
<dbReference type="GeneID" id="93451827"/>
<dbReference type="KEGG" id="pde:Pden_0603"/>
<dbReference type="eggNOG" id="COG0104">
    <property type="taxonomic scope" value="Bacteria"/>
</dbReference>
<dbReference type="HOGENOM" id="CLU_029848_0_0_5"/>
<dbReference type="OrthoDB" id="9807553at2"/>
<dbReference type="UniPathway" id="UPA00075">
    <property type="reaction ID" value="UER00335"/>
</dbReference>
<dbReference type="Proteomes" id="UP000000361">
    <property type="component" value="Chromosome 1"/>
</dbReference>
<dbReference type="GO" id="GO:0005737">
    <property type="term" value="C:cytoplasm"/>
    <property type="evidence" value="ECO:0007669"/>
    <property type="project" value="UniProtKB-SubCell"/>
</dbReference>
<dbReference type="GO" id="GO:0004019">
    <property type="term" value="F:adenylosuccinate synthase activity"/>
    <property type="evidence" value="ECO:0007669"/>
    <property type="project" value="UniProtKB-UniRule"/>
</dbReference>
<dbReference type="GO" id="GO:0005525">
    <property type="term" value="F:GTP binding"/>
    <property type="evidence" value="ECO:0007669"/>
    <property type="project" value="UniProtKB-UniRule"/>
</dbReference>
<dbReference type="GO" id="GO:0000287">
    <property type="term" value="F:magnesium ion binding"/>
    <property type="evidence" value="ECO:0007669"/>
    <property type="project" value="UniProtKB-UniRule"/>
</dbReference>
<dbReference type="GO" id="GO:0044208">
    <property type="term" value="P:'de novo' AMP biosynthetic process"/>
    <property type="evidence" value="ECO:0007669"/>
    <property type="project" value="UniProtKB-UniRule"/>
</dbReference>
<dbReference type="GO" id="GO:0046040">
    <property type="term" value="P:IMP metabolic process"/>
    <property type="evidence" value="ECO:0007669"/>
    <property type="project" value="TreeGrafter"/>
</dbReference>
<dbReference type="CDD" id="cd03108">
    <property type="entry name" value="AdSS"/>
    <property type="match status" value="1"/>
</dbReference>
<dbReference type="FunFam" id="1.10.300.10:FF:000001">
    <property type="entry name" value="Adenylosuccinate synthetase"/>
    <property type="match status" value="1"/>
</dbReference>
<dbReference type="FunFam" id="3.90.170.10:FF:000001">
    <property type="entry name" value="Adenylosuccinate synthetase"/>
    <property type="match status" value="1"/>
</dbReference>
<dbReference type="Gene3D" id="3.40.440.10">
    <property type="entry name" value="Adenylosuccinate Synthetase, subunit A, domain 1"/>
    <property type="match status" value="1"/>
</dbReference>
<dbReference type="Gene3D" id="1.10.300.10">
    <property type="entry name" value="Adenylosuccinate Synthetase, subunit A, domain 2"/>
    <property type="match status" value="1"/>
</dbReference>
<dbReference type="Gene3D" id="3.90.170.10">
    <property type="entry name" value="Adenylosuccinate Synthetase, subunit A, domain 3"/>
    <property type="match status" value="1"/>
</dbReference>
<dbReference type="HAMAP" id="MF_00011">
    <property type="entry name" value="Adenylosucc_synth"/>
    <property type="match status" value="1"/>
</dbReference>
<dbReference type="InterPro" id="IPR018220">
    <property type="entry name" value="Adenylosuccin_syn_GTP-bd"/>
</dbReference>
<dbReference type="InterPro" id="IPR033128">
    <property type="entry name" value="Adenylosuccin_syn_Lys_AS"/>
</dbReference>
<dbReference type="InterPro" id="IPR042109">
    <property type="entry name" value="Adenylosuccinate_synth_dom1"/>
</dbReference>
<dbReference type="InterPro" id="IPR042110">
    <property type="entry name" value="Adenylosuccinate_synth_dom2"/>
</dbReference>
<dbReference type="InterPro" id="IPR042111">
    <property type="entry name" value="Adenylosuccinate_synth_dom3"/>
</dbReference>
<dbReference type="InterPro" id="IPR001114">
    <property type="entry name" value="Adenylosuccinate_synthetase"/>
</dbReference>
<dbReference type="InterPro" id="IPR027417">
    <property type="entry name" value="P-loop_NTPase"/>
</dbReference>
<dbReference type="NCBIfam" id="NF002223">
    <property type="entry name" value="PRK01117.1"/>
    <property type="match status" value="1"/>
</dbReference>
<dbReference type="NCBIfam" id="TIGR00184">
    <property type="entry name" value="purA"/>
    <property type="match status" value="1"/>
</dbReference>
<dbReference type="PANTHER" id="PTHR11846">
    <property type="entry name" value="ADENYLOSUCCINATE SYNTHETASE"/>
    <property type="match status" value="1"/>
</dbReference>
<dbReference type="PANTHER" id="PTHR11846:SF0">
    <property type="entry name" value="ADENYLOSUCCINATE SYNTHETASE"/>
    <property type="match status" value="1"/>
</dbReference>
<dbReference type="Pfam" id="PF00709">
    <property type="entry name" value="Adenylsucc_synt"/>
    <property type="match status" value="1"/>
</dbReference>
<dbReference type="SMART" id="SM00788">
    <property type="entry name" value="Adenylsucc_synt"/>
    <property type="match status" value="1"/>
</dbReference>
<dbReference type="SUPFAM" id="SSF52540">
    <property type="entry name" value="P-loop containing nucleoside triphosphate hydrolases"/>
    <property type="match status" value="1"/>
</dbReference>
<dbReference type="PROSITE" id="PS01266">
    <property type="entry name" value="ADENYLOSUCCIN_SYN_1"/>
    <property type="match status" value="1"/>
</dbReference>
<dbReference type="PROSITE" id="PS00513">
    <property type="entry name" value="ADENYLOSUCCIN_SYN_2"/>
    <property type="match status" value="1"/>
</dbReference>
<proteinExistence type="inferred from homology"/>
<evidence type="ECO:0000255" key="1">
    <source>
        <dbReference type="HAMAP-Rule" id="MF_00011"/>
    </source>
</evidence>
<feature type="chain" id="PRO_1000000884" description="Adenylosuccinate synthetase">
    <location>
        <begin position="1"/>
        <end position="430"/>
    </location>
</feature>
<feature type="active site" description="Proton acceptor" evidence="1">
    <location>
        <position position="13"/>
    </location>
</feature>
<feature type="active site" description="Proton donor" evidence="1">
    <location>
        <position position="41"/>
    </location>
</feature>
<feature type="binding site" evidence="1">
    <location>
        <begin position="12"/>
        <end position="18"/>
    </location>
    <ligand>
        <name>GTP</name>
        <dbReference type="ChEBI" id="CHEBI:37565"/>
    </ligand>
</feature>
<feature type="binding site" description="in other chain" evidence="1">
    <location>
        <begin position="13"/>
        <end position="16"/>
    </location>
    <ligand>
        <name>IMP</name>
        <dbReference type="ChEBI" id="CHEBI:58053"/>
        <note>ligand shared between dimeric partners</note>
    </ligand>
</feature>
<feature type="binding site" evidence="1">
    <location>
        <position position="13"/>
    </location>
    <ligand>
        <name>Mg(2+)</name>
        <dbReference type="ChEBI" id="CHEBI:18420"/>
    </ligand>
</feature>
<feature type="binding site" description="in other chain" evidence="1">
    <location>
        <begin position="38"/>
        <end position="41"/>
    </location>
    <ligand>
        <name>IMP</name>
        <dbReference type="ChEBI" id="CHEBI:58053"/>
        <note>ligand shared between dimeric partners</note>
    </ligand>
</feature>
<feature type="binding site" evidence="1">
    <location>
        <begin position="40"/>
        <end position="42"/>
    </location>
    <ligand>
        <name>GTP</name>
        <dbReference type="ChEBI" id="CHEBI:37565"/>
    </ligand>
</feature>
<feature type="binding site" evidence="1">
    <location>
        <position position="40"/>
    </location>
    <ligand>
        <name>Mg(2+)</name>
        <dbReference type="ChEBI" id="CHEBI:18420"/>
    </ligand>
</feature>
<feature type="binding site" description="in other chain" evidence="1">
    <location>
        <position position="130"/>
    </location>
    <ligand>
        <name>IMP</name>
        <dbReference type="ChEBI" id="CHEBI:58053"/>
        <note>ligand shared between dimeric partners</note>
    </ligand>
</feature>
<feature type="binding site" evidence="1">
    <location>
        <position position="144"/>
    </location>
    <ligand>
        <name>IMP</name>
        <dbReference type="ChEBI" id="CHEBI:58053"/>
        <note>ligand shared between dimeric partners</note>
    </ligand>
</feature>
<feature type="binding site" description="in other chain" evidence="1">
    <location>
        <position position="224"/>
    </location>
    <ligand>
        <name>IMP</name>
        <dbReference type="ChEBI" id="CHEBI:58053"/>
        <note>ligand shared between dimeric partners</note>
    </ligand>
</feature>
<feature type="binding site" description="in other chain" evidence="1">
    <location>
        <position position="239"/>
    </location>
    <ligand>
        <name>IMP</name>
        <dbReference type="ChEBI" id="CHEBI:58053"/>
        <note>ligand shared between dimeric partners</note>
    </ligand>
</feature>
<feature type="binding site" evidence="1">
    <location>
        <begin position="299"/>
        <end position="305"/>
    </location>
    <ligand>
        <name>substrate</name>
    </ligand>
</feature>
<feature type="binding site" description="in other chain" evidence="1">
    <location>
        <position position="303"/>
    </location>
    <ligand>
        <name>IMP</name>
        <dbReference type="ChEBI" id="CHEBI:58053"/>
        <note>ligand shared between dimeric partners</note>
    </ligand>
</feature>
<feature type="binding site" evidence="1">
    <location>
        <position position="305"/>
    </location>
    <ligand>
        <name>GTP</name>
        <dbReference type="ChEBI" id="CHEBI:37565"/>
    </ligand>
</feature>
<feature type="binding site" evidence="1">
    <location>
        <begin position="331"/>
        <end position="333"/>
    </location>
    <ligand>
        <name>GTP</name>
        <dbReference type="ChEBI" id="CHEBI:37565"/>
    </ligand>
</feature>
<feature type="binding site" evidence="1">
    <location>
        <begin position="413"/>
        <end position="415"/>
    </location>
    <ligand>
        <name>GTP</name>
        <dbReference type="ChEBI" id="CHEBI:37565"/>
    </ligand>
</feature>
<gene>
    <name evidence="1" type="primary">purA</name>
    <name type="ordered locus">Pden_0603</name>
</gene>
<reference key="1">
    <citation type="submission" date="2006-12" db="EMBL/GenBank/DDBJ databases">
        <title>Complete sequence of chromosome 1 of Paracoccus denitrificans PD1222.</title>
        <authorList>
            <person name="Copeland A."/>
            <person name="Lucas S."/>
            <person name="Lapidus A."/>
            <person name="Barry K."/>
            <person name="Detter J.C."/>
            <person name="Glavina del Rio T."/>
            <person name="Hammon N."/>
            <person name="Israni S."/>
            <person name="Dalin E."/>
            <person name="Tice H."/>
            <person name="Pitluck S."/>
            <person name="Munk A.C."/>
            <person name="Brettin T."/>
            <person name="Bruce D."/>
            <person name="Han C."/>
            <person name="Tapia R."/>
            <person name="Gilna P."/>
            <person name="Schmutz J."/>
            <person name="Larimer F."/>
            <person name="Land M."/>
            <person name="Hauser L."/>
            <person name="Kyrpides N."/>
            <person name="Lykidis A."/>
            <person name="Spiro S."/>
            <person name="Richardson D.J."/>
            <person name="Moir J.W.B."/>
            <person name="Ferguson S.J."/>
            <person name="van Spanning R.J.M."/>
            <person name="Richardson P."/>
        </authorList>
    </citation>
    <scope>NUCLEOTIDE SEQUENCE [LARGE SCALE GENOMIC DNA]</scope>
    <source>
        <strain>Pd 1222</strain>
    </source>
</reference>
<comment type="function">
    <text evidence="1">Plays an important role in the de novo pathway of purine nucleotide biosynthesis. Catalyzes the first committed step in the biosynthesis of AMP from IMP.</text>
</comment>
<comment type="catalytic activity">
    <reaction evidence="1">
        <text>IMP + L-aspartate + GTP = N(6)-(1,2-dicarboxyethyl)-AMP + GDP + phosphate + 2 H(+)</text>
        <dbReference type="Rhea" id="RHEA:15753"/>
        <dbReference type="ChEBI" id="CHEBI:15378"/>
        <dbReference type="ChEBI" id="CHEBI:29991"/>
        <dbReference type="ChEBI" id="CHEBI:37565"/>
        <dbReference type="ChEBI" id="CHEBI:43474"/>
        <dbReference type="ChEBI" id="CHEBI:57567"/>
        <dbReference type="ChEBI" id="CHEBI:58053"/>
        <dbReference type="ChEBI" id="CHEBI:58189"/>
        <dbReference type="EC" id="6.3.4.4"/>
    </reaction>
</comment>
<comment type="cofactor">
    <cofactor evidence="1">
        <name>Mg(2+)</name>
        <dbReference type="ChEBI" id="CHEBI:18420"/>
    </cofactor>
    <text evidence="1">Binds 1 Mg(2+) ion per subunit.</text>
</comment>
<comment type="pathway">
    <text evidence="1">Purine metabolism; AMP biosynthesis via de novo pathway; AMP from IMP: step 1/2.</text>
</comment>
<comment type="subunit">
    <text evidence="1">Homodimer.</text>
</comment>
<comment type="subcellular location">
    <subcellularLocation>
        <location evidence="1">Cytoplasm</location>
    </subcellularLocation>
</comment>
<comment type="similarity">
    <text evidence="1">Belongs to the adenylosuccinate synthetase family.</text>
</comment>
<organism>
    <name type="scientific">Paracoccus denitrificans (strain Pd 1222)</name>
    <dbReference type="NCBI Taxonomy" id="318586"/>
    <lineage>
        <taxon>Bacteria</taxon>
        <taxon>Pseudomonadati</taxon>
        <taxon>Pseudomonadota</taxon>
        <taxon>Alphaproteobacteria</taxon>
        <taxon>Rhodobacterales</taxon>
        <taxon>Paracoccaceae</taxon>
        <taxon>Paracoccus</taxon>
    </lineage>
</organism>
<name>PURA_PARDP</name>
<sequence>MANVVVVGAQWGDEGKGKIVDWLSERADVIARFQGGHNAGHTLVIGNQVFKLSLLPSGIVRKGKMAVIGNGVVLDPWSLFAEIDKLSAQGVEISPANLMIAENTPLILPLHQDLDKLREEAAGASKIGTTGRGIGPAYEDKVGRRTIRVADLGDEETLDSRLDRLLAHHDALRQGLGAAPIDRAELRAKLLEIAPKLLQYAQPVWKVMNDYRKAGKRILFEGAQGSLLDIDFGTYPYVTSSTTMSGMAASGTGLGPSAIGFVLGIVKAYTTRVGEGPFPTELDDADGQRLGERGHEFGTVTGRKRRCGWFDAVLVRQTCAISGVDGIALTKLDVLDGFQTLKICTGYEVDGQHYDHLPTAASLQAKAKPVYEEMEGWQESTQGARSWADLPANAIKYVRRIEELIQCPVALLSTSPERDDTILVTDPFAD</sequence>
<accession>A1AZM1</accession>
<protein>
    <recommendedName>
        <fullName evidence="1">Adenylosuccinate synthetase</fullName>
        <shortName evidence="1">AMPSase</shortName>
        <shortName evidence="1">AdSS</shortName>
        <ecNumber evidence="1">6.3.4.4</ecNumber>
    </recommendedName>
    <alternativeName>
        <fullName evidence="1">IMP--aspartate ligase</fullName>
    </alternativeName>
</protein>
<keyword id="KW-0963">Cytoplasm</keyword>
<keyword id="KW-0342">GTP-binding</keyword>
<keyword id="KW-0436">Ligase</keyword>
<keyword id="KW-0460">Magnesium</keyword>
<keyword id="KW-0479">Metal-binding</keyword>
<keyword id="KW-0547">Nucleotide-binding</keyword>
<keyword id="KW-0658">Purine biosynthesis</keyword>
<keyword id="KW-1185">Reference proteome</keyword>